<keyword id="KW-0687">Ribonucleoprotein</keyword>
<keyword id="KW-0689">Ribosomal protein</keyword>
<keyword id="KW-0694">RNA-binding</keyword>
<keyword id="KW-0699">rRNA-binding</keyword>
<comment type="function">
    <text evidence="1">One of two assembly initiator proteins, it binds directly to the 5'-end of the 23S rRNA, where it nucleates assembly of the 50S subunit.</text>
</comment>
<comment type="function">
    <text evidence="1">One of the proteins that surrounds the polypeptide exit tunnel on the outside of the subunit.</text>
</comment>
<comment type="subunit">
    <text evidence="1">Part of the 50S ribosomal subunit.</text>
</comment>
<comment type="similarity">
    <text evidence="1">Belongs to the universal ribosomal protein uL24 family.</text>
</comment>
<proteinExistence type="inferred from homology"/>
<feature type="chain" id="PRO_0000241681" description="Large ribosomal subunit protein uL24">
    <location>
        <begin position="1"/>
        <end position="104"/>
    </location>
</feature>
<evidence type="ECO:0000255" key="1">
    <source>
        <dbReference type="HAMAP-Rule" id="MF_01326"/>
    </source>
</evidence>
<evidence type="ECO:0000305" key="2"/>
<accession>Q31IX1</accession>
<gene>
    <name evidence="1" type="primary">rplX</name>
    <name type="ordered locus">Tcr_0306</name>
</gene>
<name>RL24_HYDCU</name>
<sequence>MNRLRKGDEVIVIAGKDKGKRGSVSQVMQNGKLIVDGINLAKKHVKPNPMTGEQGGIVSKEMPVDASNVALYNPETKKADRVGVRVEGDVKTRFFKSNGKSVDA</sequence>
<organism>
    <name type="scientific">Hydrogenovibrio crunogenus (strain DSM 25203 / XCL-2)</name>
    <name type="common">Thiomicrospira crunogena</name>
    <dbReference type="NCBI Taxonomy" id="317025"/>
    <lineage>
        <taxon>Bacteria</taxon>
        <taxon>Pseudomonadati</taxon>
        <taxon>Pseudomonadota</taxon>
        <taxon>Gammaproteobacteria</taxon>
        <taxon>Thiotrichales</taxon>
        <taxon>Piscirickettsiaceae</taxon>
        <taxon>Hydrogenovibrio</taxon>
    </lineage>
</organism>
<dbReference type="EMBL" id="CP000109">
    <property type="protein sequence ID" value="ABB40902.1"/>
    <property type="molecule type" value="Genomic_DNA"/>
</dbReference>
<dbReference type="SMR" id="Q31IX1"/>
<dbReference type="STRING" id="317025.Tcr_0306"/>
<dbReference type="KEGG" id="tcx:Tcr_0306"/>
<dbReference type="eggNOG" id="COG0198">
    <property type="taxonomic scope" value="Bacteria"/>
</dbReference>
<dbReference type="HOGENOM" id="CLU_093315_2_2_6"/>
<dbReference type="OrthoDB" id="9807419at2"/>
<dbReference type="GO" id="GO:1990904">
    <property type="term" value="C:ribonucleoprotein complex"/>
    <property type="evidence" value="ECO:0007669"/>
    <property type="project" value="UniProtKB-KW"/>
</dbReference>
<dbReference type="GO" id="GO:0005840">
    <property type="term" value="C:ribosome"/>
    <property type="evidence" value="ECO:0007669"/>
    <property type="project" value="UniProtKB-KW"/>
</dbReference>
<dbReference type="GO" id="GO:0019843">
    <property type="term" value="F:rRNA binding"/>
    <property type="evidence" value="ECO:0007669"/>
    <property type="project" value="UniProtKB-UniRule"/>
</dbReference>
<dbReference type="GO" id="GO:0003735">
    <property type="term" value="F:structural constituent of ribosome"/>
    <property type="evidence" value="ECO:0007669"/>
    <property type="project" value="InterPro"/>
</dbReference>
<dbReference type="GO" id="GO:0006412">
    <property type="term" value="P:translation"/>
    <property type="evidence" value="ECO:0007669"/>
    <property type="project" value="UniProtKB-UniRule"/>
</dbReference>
<dbReference type="CDD" id="cd06089">
    <property type="entry name" value="KOW_RPL26"/>
    <property type="match status" value="1"/>
</dbReference>
<dbReference type="FunFam" id="2.30.30.30:FF:000004">
    <property type="entry name" value="50S ribosomal protein L24"/>
    <property type="match status" value="1"/>
</dbReference>
<dbReference type="Gene3D" id="2.30.30.30">
    <property type="match status" value="1"/>
</dbReference>
<dbReference type="HAMAP" id="MF_01326_B">
    <property type="entry name" value="Ribosomal_uL24_B"/>
    <property type="match status" value="1"/>
</dbReference>
<dbReference type="InterPro" id="IPR005824">
    <property type="entry name" value="KOW"/>
</dbReference>
<dbReference type="InterPro" id="IPR014722">
    <property type="entry name" value="Rib_uL2_dom2"/>
</dbReference>
<dbReference type="InterPro" id="IPR003256">
    <property type="entry name" value="Ribosomal_uL24"/>
</dbReference>
<dbReference type="InterPro" id="IPR005825">
    <property type="entry name" value="Ribosomal_uL24_CS"/>
</dbReference>
<dbReference type="InterPro" id="IPR041988">
    <property type="entry name" value="Ribosomal_uL24_KOW"/>
</dbReference>
<dbReference type="InterPro" id="IPR008991">
    <property type="entry name" value="Translation_prot_SH3-like_sf"/>
</dbReference>
<dbReference type="NCBIfam" id="TIGR01079">
    <property type="entry name" value="rplX_bact"/>
    <property type="match status" value="1"/>
</dbReference>
<dbReference type="PANTHER" id="PTHR12903">
    <property type="entry name" value="MITOCHONDRIAL RIBOSOMAL PROTEIN L24"/>
    <property type="match status" value="1"/>
</dbReference>
<dbReference type="Pfam" id="PF00467">
    <property type="entry name" value="KOW"/>
    <property type="match status" value="1"/>
</dbReference>
<dbReference type="Pfam" id="PF17136">
    <property type="entry name" value="ribosomal_L24"/>
    <property type="match status" value="1"/>
</dbReference>
<dbReference type="SMART" id="SM00739">
    <property type="entry name" value="KOW"/>
    <property type="match status" value="1"/>
</dbReference>
<dbReference type="SUPFAM" id="SSF50104">
    <property type="entry name" value="Translation proteins SH3-like domain"/>
    <property type="match status" value="1"/>
</dbReference>
<dbReference type="PROSITE" id="PS01108">
    <property type="entry name" value="RIBOSOMAL_L24"/>
    <property type="match status" value="1"/>
</dbReference>
<reference key="1">
    <citation type="journal article" date="2006" name="PLoS Biol.">
        <title>The genome of deep-sea vent chemolithoautotroph Thiomicrospira crunogena XCL-2.</title>
        <authorList>
            <person name="Scott K.M."/>
            <person name="Sievert S.M."/>
            <person name="Abril F.N."/>
            <person name="Ball L.A."/>
            <person name="Barrett C.J."/>
            <person name="Blake R.A."/>
            <person name="Boller A.J."/>
            <person name="Chain P.S.G."/>
            <person name="Clark J.A."/>
            <person name="Davis C.R."/>
            <person name="Detter C."/>
            <person name="Do K.F."/>
            <person name="Dobrinski K.P."/>
            <person name="Faza B.I."/>
            <person name="Fitzpatrick K.A."/>
            <person name="Freyermuth S.K."/>
            <person name="Harmer T.L."/>
            <person name="Hauser L.J."/>
            <person name="Huegler M."/>
            <person name="Kerfeld C.A."/>
            <person name="Klotz M.G."/>
            <person name="Kong W.W."/>
            <person name="Land M."/>
            <person name="Lapidus A."/>
            <person name="Larimer F.W."/>
            <person name="Longo D.L."/>
            <person name="Lucas S."/>
            <person name="Malfatti S.A."/>
            <person name="Massey S.E."/>
            <person name="Martin D.D."/>
            <person name="McCuddin Z."/>
            <person name="Meyer F."/>
            <person name="Moore J.L."/>
            <person name="Ocampo L.H. Jr."/>
            <person name="Paul J.H."/>
            <person name="Paulsen I.T."/>
            <person name="Reep D.K."/>
            <person name="Ren Q."/>
            <person name="Ross R.L."/>
            <person name="Sato P.Y."/>
            <person name="Thomas P."/>
            <person name="Tinkham L.E."/>
            <person name="Zeruth G.T."/>
        </authorList>
    </citation>
    <scope>NUCLEOTIDE SEQUENCE [LARGE SCALE GENOMIC DNA]</scope>
    <source>
        <strain>DSM 25203 / XCL-2</strain>
    </source>
</reference>
<protein>
    <recommendedName>
        <fullName evidence="1">Large ribosomal subunit protein uL24</fullName>
    </recommendedName>
    <alternativeName>
        <fullName evidence="2">50S ribosomal protein L24</fullName>
    </alternativeName>
</protein>